<organism>
    <name type="scientific">Shigella sonnei (strain Ss046)</name>
    <dbReference type="NCBI Taxonomy" id="300269"/>
    <lineage>
        <taxon>Bacteria</taxon>
        <taxon>Pseudomonadati</taxon>
        <taxon>Pseudomonadota</taxon>
        <taxon>Gammaproteobacteria</taxon>
        <taxon>Enterobacterales</taxon>
        <taxon>Enterobacteriaceae</taxon>
        <taxon>Shigella</taxon>
    </lineage>
</organism>
<gene>
    <name evidence="1" type="primary">rimM</name>
    <name type="ordered locus">SSON_2765</name>
</gene>
<dbReference type="EMBL" id="CP000038">
    <property type="protein sequence ID" value="AAZ89382.1"/>
    <property type="molecule type" value="Genomic_DNA"/>
</dbReference>
<dbReference type="SMR" id="Q3YYN0"/>
<dbReference type="KEGG" id="ssn:SSON_2765"/>
<dbReference type="HOGENOM" id="CLU_077636_1_0_6"/>
<dbReference type="Proteomes" id="UP000002529">
    <property type="component" value="Chromosome"/>
</dbReference>
<dbReference type="GO" id="GO:0005737">
    <property type="term" value="C:cytoplasm"/>
    <property type="evidence" value="ECO:0007669"/>
    <property type="project" value="UniProtKB-SubCell"/>
</dbReference>
<dbReference type="GO" id="GO:0005840">
    <property type="term" value="C:ribosome"/>
    <property type="evidence" value="ECO:0007669"/>
    <property type="project" value="InterPro"/>
</dbReference>
<dbReference type="GO" id="GO:0043022">
    <property type="term" value="F:ribosome binding"/>
    <property type="evidence" value="ECO:0007669"/>
    <property type="project" value="InterPro"/>
</dbReference>
<dbReference type="GO" id="GO:0042274">
    <property type="term" value="P:ribosomal small subunit biogenesis"/>
    <property type="evidence" value="ECO:0007669"/>
    <property type="project" value="UniProtKB-UniRule"/>
</dbReference>
<dbReference type="GO" id="GO:0006364">
    <property type="term" value="P:rRNA processing"/>
    <property type="evidence" value="ECO:0007669"/>
    <property type="project" value="UniProtKB-UniRule"/>
</dbReference>
<dbReference type="FunFam" id="2.30.30.240:FF:000001">
    <property type="entry name" value="Ribosome maturation factor RimM"/>
    <property type="match status" value="1"/>
</dbReference>
<dbReference type="FunFam" id="2.40.30.60:FF:000001">
    <property type="entry name" value="Ribosome maturation factor RimM"/>
    <property type="match status" value="1"/>
</dbReference>
<dbReference type="Gene3D" id="2.30.30.240">
    <property type="entry name" value="PRC-barrel domain"/>
    <property type="match status" value="1"/>
</dbReference>
<dbReference type="Gene3D" id="2.40.30.60">
    <property type="entry name" value="RimM"/>
    <property type="match status" value="1"/>
</dbReference>
<dbReference type="HAMAP" id="MF_00014">
    <property type="entry name" value="Ribosome_mat_RimM"/>
    <property type="match status" value="1"/>
</dbReference>
<dbReference type="InterPro" id="IPR011033">
    <property type="entry name" value="PRC_barrel-like_sf"/>
</dbReference>
<dbReference type="InterPro" id="IPR056792">
    <property type="entry name" value="PRC_RimM"/>
</dbReference>
<dbReference type="InterPro" id="IPR011961">
    <property type="entry name" value="RimM"/>
</dbReference>
<dbReference type="InterPro" id="IPR002676">
    <property type="entry name" value="RimM_N"/>
</dbReference>
<dbReference type="InterPro" id="IPR036976">
    <property type="entry name" value="RimM_N_sf"/>
</dbReference>
<dbReference type="InterPro" id="IPR009000">
    <property type="entry name" value="Transl_B-barrel_sf"/>
</dbReference>
<dbReference type="NCBIfam" id="TIGR02273">
    <property type="entry name" value="16S_RimM"/>
    <property type="match status" value="1"/>
</dbReference>
<dbReference type="PANTHER" id="PTHR33692">
    <property type="entry name" value="RIBOSOME MATURATION FACTOR RIMM"/>
    <property type="match status" value="1"/>
</dbReference>
<dbReference type="PANTHER" id="PTHR33692:SF1">
    <property type="entry name" value="RIBOSOME MATURATION FACTOR RIMM"/>
    <property type="match status" value="1"/>
</dbReference>
<dbReference type="Pfam" id="PF24986">
    <property type="entry name" value="PRC_RimM"/>
    <property type="match status" value="1"/>
</dbReference>
<dbReference type="Pfam" id="PF01782">
    <property type="entry name" value="RimM"/>
    <property type="match status" value="1"/>
</dbReference>
<dbReference type="SUPFAM" id="SSF50346">
    <property type="entry name" value="PRC-barrel domain"/>
    <property type="match status" value="1"/>
</dbReference>
<dbReference type="SUPFAM" id="SSF50447">
    <property type="entry name" value="Translation proteins"/>
    <property type="match status" value="1"/>
</dbReference>
<comment type="function">
    <text evidence="1">An accessory protein needed during the final step in the assembly of 30S ribosomal subunit, possibly for assembly of the head region. Essential for efficient processing of 16S rRNA. May be needed both before and after RbfA during the maturation of 16S rRNA. It has affinity for free ribosomal 30S subunits but not for 70S ribosomes.</text>
</comment>
<comment type="subunit">
    <text evidence="1">Binds ribosomal protein uS19.</text>
</comment>
<comment type="subcellular location">
    <subcellularLocation>
        <location evidence="1">Cytoplasm</location>
    </subcellularLocation>
</comment>
<comment type="domain">
    <text evidence="1">The PRC barrel domain binds ribosomal protein uS19.</text>
</comment>
<comment type="similarity">
    <text evidence="1">Belongs to the RimM family.</text>
</comment>
<proteinExistence type="inferred from homology"/>
<protein>
    <recommendedName>
        <fullName evidence="1">Ribosome maturation factor RimM</fullName>
    </recommendedName>
</protein>
<evidence type="ECO:0000255" key="1">
    <source>
        <dbReference type="HAMAP-Rule" id="MF_00014"/>
    </source>
</evidence>
<sequence length="185" mass="20967">MVMMSKQLTAQAPVDPIVLGKMGSSYGIRGWLRVFSSTEDAESIFDYQPWFIQKAGQWQQVQLESWKHHNQDMIIKLKGVDDRDAANLLTNCEIVVDSSQLPQLEEGDYYWKDLMGCQVVTTEGYDLGKVVDMMETGSNDVLVIKANLKDAFGIKERLVPFLDGQVIKKVDLTTRSIEVDWDPGF</sequence>
<feature type="chain" id="PRO_0000244168" description="Ribosome maturation factor RimM">
    <location>
        <begin position="1"/>
        <end position="185"/>
    </location>
</feature>
<feature type="domain" description="PRC barrel" evidence="1">
    <location>
        <begin position="106"/>
        <end position="185"/>
    </location>
</feature>
<reference key="1">
    <citation type="journal article" date="2005" name="Nucleic Acids Res.">
        <title>Genome dynamics and diversity of Shigella species, the etiologic agents of bacillary dysentery.</title>
        <authorList>
            <person name="Yang F."/>
            <person name="Yang J."/>
            <person name="Zhang X."/>
            <person name="Chen L."/>
            <person name="Jiang Y."/>
            <person name="Yan Y."/>
            <person name="Tang X."/>
            <person name="Wang J."/>
            <person name="Xiong Z."/>
            <person name="Dong J."/>
            <person name="Xue Y."/>
            <person name="Zhu Y."/>
            <person name="Xu X."/>
            <person name="Sun L."/>
            <person name="Chen S."/>
            <person name="Nie H."/>
            <person name="Peng J."/>
            <person name="Xu J."/>
            <person name="Wang Y."/>
            <person name="Yuan Z."/>
            <person name="Wen Y."/>
            <person name="Yao Z."/>
            <person name="Shen Y."/>
            <person name="Qiang B."/>
            <person name="Hou Y."/>
            <person name="Yu J."/>
            <person name="Jin Q."/>
        </authorList>
    </citation>
    <scope>NUCLEOTIDE SEQUENCE [LARGE SCALE GENOMIC DNA]</scope>
    <source>
        <strain>Ss046</strain>
    </source>
</reference>
<keyword id="KW-0143">Chaperone</keyword>
<keyword id="KW-0963">Cytoplasm</keyword>
<keyword id="KW-1185">Reference proteome</keyword>
<keyword id="KW-0690">Ribosome biogenesis</keyword>
<keyword id="KW-0698">rRNA processing</keyword>
<name>RIMM_SHISS</name>
<accession>Q3YYN0</accession>